<evidence type="ECO:0000255" key="1">
    <source>
        <dbReference type="HAMAP-Rule" id="MF_00766"/>
    </source>
</evidence>
<gene>
    <name evidence="1" type="primary">mtgA</name>
    <name type="ordered locus">RC1_3308</name>
</gene>
<organism>
    <name type="scientific">Rhodospirillum centenum (strain ATCC 51521 / SW)</name>
    <dbReference type="NCBI Taxonomy" id="414684"/>
    <lineage>
        <taxon>Bacteria</taxon>
        <taxon>Pseudomonadati</taxon>
        <taxon>Pseudomonadota</taxon>
        <taxon>Alphaproteobacteria</taxon>
        <taxon>Rhodospirillales</taxon>
        <taxon>Rhodospirillaceae</taxon>
        <taxon>Rhodospirillum</taxon>
    </lineage>
</organism>
<proteinExistence type="inferred from homology"/>
<sequence>MSMIPRLLRRMAAVLAGLALLLVALAVSYRWVPPPGSPLMAIRLAQGAPGIDRRWVPLDAISPHLVAAVVASEDSRFCTHHGIDWDAVEAARDHNEAGGRLRGASTLSMQTAKNAFLWPDRTWLRKGAELGFTLLIEATWPKRRIAEVYLNLAEWGDGIFGAEAAARRHFGKPAADLSAQEAALLAAVLPNPRRWSPERPTAYIRNRAATIERRMAIVRRDGLAACILDPA</sequence>
<dbReference type="EC" id="2.4.99.28" evidence="1"/>
<dbReference type="EMBL" id="CP000613">
    <property type="protein sequence ID" value="ACJ00670.1"/>
    <property type="molecule type" value="Genomic_DNA"/>
</dbReference>
<dbReference type="RefSeq" id="WP_012568448.1">
    <property type="nucleotide sequence ID" value="NC_011420.2"/>
</dbReference>
<dbReference type="SMR" id="B6IWJ6"/>
<dbReference type="STRING" id="414684.RC1_3308"/>
<dbReference type="CAZy" id="GT51">
    <property type="family name" value="Glycosyltransferase Family 51"/>
</dbReference>
<dbReference type="KEGG" id="rce:RC1_3308"/>
<dbReference type="eggNOG" id="COG0744">
    <property type="taxonomic scope" value="Bacteria"/>
</dbReference>
<dbReference type="HOGENOM" id="CLU_006354_1_1_5"/>
<dbReference type="OrthoDB" id="9766909at2"/>
<dbReference type="UniPathway" id="UPA00219"/>
<dbReference type="Proteomes" id="UP000001591">
    <property type="component" value="Chromosome"/>
</dbReference>
<dbReference type="GO" id="GO:0009274">
    <property type="term" value="C:peptidoglycan-based cell wall"/>
    <property type="evidence" value="ECO:0007669"/>
    <property type="project" value="InterPro"/>
</dbReference>
<dbReference type="GO" id="GO:0005886">
    <property type="term" value="C:plasma membrane"/>
    <property type="evidence" value="ECO:0007669"/>
    <property type="project" value="UniProtKB-SubCell"/>
</dbReference>
<dbReference type="GO" id="GO:0016763">
    <property type="term" value="F:pentosyltransferase activity"/>
    <property type="evidence" value="ECO:0007669"/>
    <property type="project" value="InterPro"/>
</dbReference>
<dbReference type="GO" id="GO:0008955">
    <property type="term" value="F:peptidoglycan glycosyltransferase activity"/>
    <property type="evidence" value="ECO:0007669"/>
    <property type="project" value="UniProtKB-UniRule"/>
</dbReference>
<dbReference type="GO" id="GO:0071555">
    <property type="term" value="P:cell wall organization"/>
    <property type="evidence" value="ECO:0007669"/>
    <property type="project" value="UniProtKB-KW"/>
</dbReference>
<dbReference type="GO" id="GO:0009252">
    <property type="term" value="P:peptidoglycan biosynthetic process"/>
    <property type="evidence" value="ECO:0007669"/>
    <property type="project" value="UniProtKB-UniRule"/>
</dbReference>
<dbReference type="GO" id="GO:0008360">
    <property type="term" value="P:regulation of cell shape"/>
    <property type="evidence" value="ECO:0007669"/>
    <property type="project" value="UniProtKB-KW"/>
</dbReference>
<dbReference type="Gene3D" id="1.10.3810.10">
    <property type="entry name" value="Biosynthetic peptidoglycan transglycosylase-like"/>
    <property type="match status" value="1"/>
</dbReference>
<dbReference type="HAMAP" id="MF_00766">
    <property type="entry name" value="PGT_MtgA"/>
    <property type="match status" value="1"/>
</dbReference>
<dbReference type="InterPro" id="IPR001264">
    <property type="entry name" value="Glyco_trans_51"/>
</dbReference>
<dbReference type="InterPro" id="IPR023346">
    <property type="entry name" value="Lysozyme-like_dom_sf"/>
</dbReference>
<dbReference type="InterPro" id="IPR036950">
    <property type="entry name" value="PBP_transglycosylase"/>
</dbReference>
<dbReference type="InterPro" id="IPR011812">
    <property type="entry name" value="Pep_trsgly"/>
</dbReference>
<dbReference type="NCBIfam" id="TIGR02070">
    <property type="entry name" value="mono_pep_trsgly"/>
    <property type="match status" value="1"/>
</dbReference>
<dbReference type="PANTHER" id="PTHR30400:SF0">
    <property type="entry name" value="BIOSYNTHETIC PEPTIDOGLYCAN TRANSGLYCOSYLASE"/>
    <property type="match status" value="1"/>
</dbReference>
<dbReference type="PANTHER" id="PTHR30400">
    <property type="entry name" value="MONOFUNCTIONAL BIOSYNTHETIC PEPTIDOGLYCAN TRANSGLYCOSYLASE"/>
    <property type="match status" value="1"/>
</dbReference>
<dbReference type="Pfam" id="PF00912">
    <property type="entry name" value="Transgly"/>
    <property type="match status" value="1"/>
</dbReference>
<dbReference type="SUPFAM" id="SSF53955">
    <property type="entry name" value="Lysozyme-like"/>
    <property type="match status" value="1"/>
</dbReference>
<accession>B6IWJ6</accession>
<name>MTGA_RHOCS</name>
<reference key="1">
    <citation type="submission" date="2007-03" db="EMBL/GenBank/DDBJ databases">
        <title>Genome sequence of Rhodospirillum centenum.</title>
        <authorList>
            <person name="Touchman J.W."/>
            <person name="Bauer C."/>
            <person name="Blankenship R.E."/>
        </authorList>
    </citation>
    <scope>NUCLEOTIDE SEQUENCE [LARGE SCALE GENOMIC DNA]</scope>
    <source>
        <strain>ATCC 51521 / SW</strain>
    </source>
</reference>
<feature type="chain" id="PRO_1000133602" description="Biosynthetic peptidoglycan transglycosylase">
    <location>
        <begin position="1"/>
        <end position="231"/>
    </location>
</feature>
<feature type="transmembrane region" description="Helical" evidence="1">
    <location>
        <begin position="12"/>
        <end position="34"/>
    </location>
</feature>
<protein>
    <recommendedName>
        <fullName evidence="1">Biosynthetic peptidoglycan transglycosylase</fullName>
        <ecNumber evidence="1">2.4.99.28</ecNumber>
    </recommendedName>
    <alternativeName>
        <fullName evidence="1">Glycan polymerase</fullName>
    </alternativeName>
    <alternativeName>
        <fullName evidence="1">Peptidoglycan glycosyltransferase MtgA</fullName>
        <shortName evidence="1">PGT</shortName>
    </alternativeName>
</protein>
<keyword id="KW-0997">Cell inner membrane</keyword>
<keyword id="KW-1003">Cell membrane</keyword>
<keyword id="KW-0133">Cell shape</keyword>
<keyword id="KW-0961">Cell wall biogenesis/degradation</keyword>
<keyword id="KW-0328">Glycosyltransferase</keyword>
<keyword id="KW-0472">Membrane</keyword>
<keyword id="KW-0573">Peptidoglycan synthesis</keyword>
<keyword id="KW-1185">Reference proteome</keyword>
<keyword id="KW-0808">Transferase</keyword>
<keyword id="KW-0812">Transmembrane</keyword>
<keyword id="KW-1133">Transmembrane helix</keyword>
<comment type="function">
    <text evidence="1">Peptidoglycan polymerase that catalyzes glycan chain elongation from lipid-linked precursors.</text>
</comment>
<comment type="catalytic activity">
    <reaction evidence="1">
        <text>[GlcNAc-(1-&gt;4)-Mur2Ac(oyl-L-Ala-gamma-D-Glu-L-Lys-D-Ala-D-Ala)](n)-di-trans,octa-cis-undecaprenyl diphosphate + beta-D-GlcNAc-(1-&gt;4)-Mur2Ac(oyl-L-Ala-gamma-D-Glu-L-Lys-D-Ala-D-Ala)-di-trans,octa-cis-undecaprenyl diphosphate = [GlcNAc-(1-&gt;4)-Mur2Ac(oyl-L-Ala-gamma-D-Glu-L-Lys-D-Ala-D-Ala)](n+1)-di-trans,octa-cis-undecaprenyl diphosphate + di-trans,octa-cis-undecaprenyl diphosphate + H(+)</text>
        <dbReference type="Rhea" id="RHEA:23708"/>
        <dbReference type="Rhea" id="RHEA-COMP:9602"/>
        <dbReference type="Rhea" id="RHEA-COMP:9603"/>
        <dbReference type="ChEBI" id="CHEBI:15378"/>
        <dbReference type="ChEBI" id="CHEBI:58405"/>
        <dbReference type="ChEBI" id="CHEBI:60033"/>
        <dbReference type="ChEBI" id="CHEBI:78435"/>
        <dbReference type="EC" id="2.4.99.28"/>
    </reaction>
</comment>
<comment type="pathway">
    <text evidence="1">Cell wall biogenesis; peptidoglycan biosynthesis.</text>
</comment>
<comment type="subcellular location">
    <subcellularLocation>
        <location evidence="1">Cell inner membrane</location>
        <topology evidence="1">Single-pass membrane protein</topology>
    </subcellularLocation>
</comment>
<comment type="similarity">
    <text evidence="1">Belongs to the glycosyltransferase 51 family.</text>
</comment>